<accession>Q9HY23</accession>
<protein>
    <recommendedName>
        <fullName evidence="1">Diacylglycerol kinase</fullName>
        <shortName evidence="1">DAGK</shortName>
        <ecNumber evidence="1">2.7.1.107</ecNumber>
    </recommendedName>
    <alternativeName>
        <fullName evidence="1">Diglyceride kinase</fullName>
        <shortName evidence="1">DGK</shortName>
    </alternativeName>
</protein>
<feature type="chain" id="PRO_0000287766" description="Diacylglycerol kinase">
    <location>
        <begin position="1"/>
        <end position="123"/>
    </location>
</feature>
<feature type="transmembrane region" description="Helical" evidence="2">
    <location>
        <begin position="15"/>
        <end position="32"/>
    </location>
</feature>
<feature type="transmembrane region" description="Helical" evidence="2">
    <location>
        <begin position="35"/>
        <end position="55"/>
    </location>
</feature>
<feature type="transmembrane region" description="Helical" evidence="2">
    <location>
        <begin position="61"/>
        <end position="81"/>
    </location>
</feature>
<feature type="transmembrane region" description="Helical" evidence="2">
    <location>
        <begin position="102"/>
        <end position="122"/>
    </location>
</feature>
<feature type="active site" description="Proton acceptor" evidence="1">
    <location>
        <position position="74"/>
    </location>
</feature>
<feature type="binding site" evidence="1">
    <location>
        <position position="33"/>
    </location>
    <ligand>
        <name>a divalent metal cation</name>
        <dbReference type="ChEBI" id="CHEBI:60240"/>
    </ligand>
</feature>
<feature type="binding site" evidence="1">
    <location>
        <position position="81"/>
    </location>
    <ligand>
        <name>a divalent metal cation</name>
        <dbReference type="ChEBI" id="CHEBI:60240"/>
    </ligand>
</feature>
<gene>
    <name type="primary">dgkA</name>
    <name type="ordered locus">PA3603</name>
</gene>
<reference key="1">
    <citation type="journal article" date="2000" name="Nature">
        <title>Complete genome sequence of Pseudomonas aeruginosa PAO1, an opportunistic pathogen.</title>
        <authorList>
            <person name="Stover C.K."/>
            <person name="Pham X.-Q.T."/>
            <person name="Erwin A.L."/>
            <person name="Mizoguchi S.D."/>
            <person name="Warrener P."/>
            <person name="Hickey M.J."/>
            <person name="Brinkman F.S.L."/>
            <person name="Hufnagle W.O."/>
            <person name="Kowalik D.J."/>
            <person name="Lagrou M."/>
            <person name="Garber R.L."/>
            <person name="Goltry L."/>
            <person name="Tolentino E."/>
            <person name="Westbrock-Wadman S."/>
            <person name="Yuan Y."/>
            <person name="Brody L.L."/>
            <person name="Coulter S.N."/>
            <person name="Folger K.R."/>
            <person name="Kas A."/>
            <person name="Larbig K."/>
            <person name="Lim R.M."/>
            <person name="Smith K.A."/>
            <person name="Spencer D.H."/>
            <person name="Wong G.K.-S."/>
            <person name="Wu Z."/>
            <person name="Paulsen I.T."/>
            <person name="Reizer J."/>
            <person name="Saier M.H. Jr."/>
            <person name="Hancock R.E.W."/>
            <person name="Lory S."/>
            <person name="Olson M.V."/>
        </authorList>
    </citation>
    <scope>NUCLEOTIDE SEQUENCE [LARGE SCALE GENOMIC DNA]</scope>
    <source>
        <strain>ATCC 15692 / DSM 22644 / CIP 104116 / JCM 14847 / LMG 12228 / 1C / PRS 101 / PAO1</strain>
    </source>
</reference>
<keyword id="KW-0067">ATP-binding</keyword>
<keyword id="KW-0997">Cell inner membrane</keyword>
<keyword id="KW-1003">Cell membrane</keyword>
<keyword id="KW-0418">Kinase</keyword>
<keyword id="KW-0444">Lipid biosynthesis</keyword>
<keyword id="KW-0443">Lipid metabolism</keyword>
<keyword id="KW-0460">Magnesium</keyword>
<keyword id="KW-0472">Membrane</keyword>
<keyword id="KW-0479">Metal-binding</keyword>
<keyword id="KW-0547">Nucleotide-binding</keyword>
<keyword id="KW-0594">Phospholipid biosynthesis</keyword>
<keyword id="KW-1208">Phospholipid metabolism</keyword>
<keyword id="KW-1185">Reference proteome</keyword>
<keyword id="KW-0808">Transferase</keyword>
<keyword id="KW-0812">Transmembrane</keyword>
<keyword id="KW-1133">Transmembrane helix</keyword>
<proteinExistence type="inferred from homology"/>
<comment type="function">
    <text evidence="1">Catalyzes the ATP-dependent phosphorylation of sn-l,2-diacylglycerol (DAG) to phosphatidic acid. Involved in the recycling of diacylglycerol produced as a by-product during membrane-derived oligosaccharide (MDO) biosynthesis.</text>
</comment>
<comment type="catalytic activity">
    <reaction evidence="1">
        <text>a 1,2-diacyl-sn-glycerol + ATP = a 1,2-diacyl-sn-glycero-3-phosphate + ADP + H(+)</text>
        <dbReference type="Rhea" id="RHEA:10272"/>
        <dbReference type="ChEBI" id="CHEBI:15378"/>
        <dbReference type="ChEBI" id="CHEBI:17815"/>
        <dbReference type="ChEBI" id="CHEBI:30616"/>
        <dbReference type="ChEBI" id="CHEBI:58608"/>
        <dbReference type="ChEBI" id="CHEBI:456216"/>
        <dbReference type="EC" id="2.7.1.107"/>
    </reaction>
</comment>
<comment type="cofactor">
    <cofactor evidence="1">
        <name>Mg(2+)</name>
        <dbReference type="ChEBI" id="CHEBI:18420"/>
    </cofactor>
</comment>
<comment type="subcellular location">
    <subcellularLocation>
        <location evidence="1">Cell inner membrane</location>
        <topology evidence="1">Multi-pass membrane protein</topology>
    </subcellularLocation>
</comment>
<comment type="similarity">
    <text evidence="3">Belongs to the bacterial diacylglycerol kinase family.</text>
</comment>
<organism>
    <name type="scientific">Pseudomonas aeruginosa (strain ATCC 15692 / DSM 22644 / CIP 104116 / JCM 14847 / LMG 12228 / 1C / PRS 101 / PAO1)</name>
    <dbReference type="NCBI Taxonomy" id="208964"/>
    <lineage>
        <taxon>Bacteria</taxon>
        <taxon>Pseudomonadati</taxon>
        <taxon>Pseudomonadota</taxon>
        <taxon>Gammaproteobacteria</taxon>
        <taxon>Pseudomonadales</taxon>
        <taxon>Pseudomonadaceae</taxon>
        <taxon>Pseudomonas</taxon>
    </lineage>
</organism>
<evidence type="ECO:0000250" key="1">
    <source>
        <dbReference type="UniProtKB" id="P0ABN1"/>
    </source>
</evidence>
<evidence type="ECO:0000255" key="2"/>
<evidence type="ECO:0000305" key="3"/>
<dbReference type="EC" id="2.7.1.107" evidence="1"/>
<dbReference type="EMBL" id="AE004091">
    <property type="protein sequence ID" value="AAG06991.1"/>
    <property type="molecule type" value="Genomic_DNA"/>
</dbReference>
<dbReference type="PIR" id="E83196">
    <property type="entry name" value="E83196"/>
</dbReference>
<dbReference type="RefSeq" id="NP_252293.1">
    <property type="nucleotide sequence ID" value="NC_002516.2"/>
</dbReference>
<dbReference type="RefSeq" id="WP_003092226.1">
    <property type="nucleotide sequence ID" value="NZ_QZGE01000001.1"/>
</dbReference>
<dbReference type="SMR" id="Q9HY23"/>
<dbReference type="FunCoup" id="Q9HY23">
    <property type="interactions" value="230"/>
</dbReference>
<dbReference type="STRING" id="208964.PA3603"/>
<dbReference type="PaxDb" id="208964-PA3603"/>
<dbReference type="DNASU" id="880149"/>
<dbReference type="GeneID" id="880149"/>
<dbReference type="KEGG" id="pae:PA3603"/>
<dbReference type="PATRIC" id="fig|208964.12.peg.3770"/>
<dbReference type="PseudoCAP" id="PA3603"/>
<dbReference type="HOGENOM" id="CLU_112343_3_0_6"/>
<dbReference type="InParanoid" id="Q9HY23"/>
<dbReference type="OrthoDB" id="9796011at2"/>
<dbReference type="PhylomeDB" id="Q9HY23"/>
<dbReference type="BioCyc" id="PAER208964:G1FZ6-3672-MONOMER"/>
<dbReference type="Proteomes" id="UP000002438">
    <property type="component" value="Chromosome"/>
</dbReference>
<dbReference type="GO" id="GO:0005886">
    <property type="term" value="C:plasma membrane"/>
    <property type="evidence" value="ECO:0000318"/>
    <property type="project" value="GO_Central"/>
</dbReference>
<dbReference type="GO" id="GO:0005524">
    <property type="term" value="F:ATP binding"/>
    <property type="evidence" value="ECO:0007669"/>
    <property type="project" value="UniProtKB-KW"/>
</dbReference>
<dbReference type="GO" id="GO:0004143">
    <property type="term" value="F:ATP-dependent diacylglycerol kinase activity"/>
    <property type="evidence" value="ECO:0007669"/>
    <property type="project" value="UniProtKB-EC"/>
</dbReference>
<dbReference type="GO" id="GO:0001727">
    <property type="term" value="F:lipid kinase activity"/>
    <property type="evidence" value="ECO:0000318"/>
    <property type="project" value="GO_Central"/>
</dbReference>
<dbReference type="GO" id="GO:0046872">
    <property type="term" value="F:metal ion binding"/>
    <property type="evidence" value="ECO:0007669"/>
    <property type="project" value="UniProtKB-KW"/>
</dbReference>
<dbReference type="GO" id="GO:0006654">
    <property type="term" value="P:phosphatidic acid biosynthetic process"/>
    <property type="evidence" value="ECO:0007669"/>
    <property type="project" value="InterPro"/>
</dbReference>
<dbReference type="CDD" id="cd14264">
    <property type="entry name" value="DAGK_IM"/>
    <property type="match status" value="1"/>
</dbReference>
<dbReference type="Gene3D" id="1.10.287.3610">
    <property type="match status" value="1"/>
</dbReference>
<dbReference type="InterPro" id="IPR000829">
    <property type="entry name" value="DAGK"/>
</dbReference>
<dbReference type="InterPro" id="IPR033718">
    <property type="entry name" value="DAGK_prok"/>
</dbReference>
<dbReference type="InterPro" id="IPR036945">
    <property type="entry name" value="DAGK_sf"/>
</dbReference>
<dbReference type="PANTHER" id="PTHR34299">
    <property type="entry name" value="DIACYLGLYCEROL KINASE"/>
    <property type="match status" value="1"/>
</dbReference>
<dbReference type="PANTHER" id="PTHR34299:SF1">
    <property type="entry name" value="DIACYLGLYCEROL KINASE"/>
    <property type="match status" value="1"/>
</dbReference>
<dbReference type="Pfam" id="PF01219">
    <property type="entry name" value="DAGK_prokar"/>
    <property type="match status" value="1"/>
</dbReference>
<dbReference type="PROSITE" id="PS01069">
    <property type="entry name" value="DAGK_PROKAR"/>
    <property type="match status" value="1"/>
</dbReference>
<sequence length="123" mass="13138">MSPSPFKGQTGLKRILNATGYSLAGFLAAFRGEAAFRQLVLLNVVLIPVAFLLDVSRGERALMIAVCLLALIVELLNSAIEATVDRVSLERHPLSKNAKDMGSAAQFVALTVITVTWATILLG</sequence>
<name>KDGL_PSEAE</name>